<protein>
    <recommendedName>
        <fullName evidence="1">Large ribosomal subunit protein bL35</fullName>
    </recommendedName>
    <alternativeName>
        <fullName evidence="3">50S ribosomal protein L35</fullName>
    </alternativeName>
</protein>
<sequence length="66" mass="7697">MPKMKTHRGAAKRVKRTASGQLKRSRAFTSHLFANKSTKQKRQLRKARLVSKSDMKRVKQLLAYKK</sequence>
<gene>
    <name evidence="1" type="primary">rpmI</name>
    <name type="ordered locus">SA1503</name>
</gene>
<comment type="similarity">
    <text evidence="1">Belongs to the bacterial ribosomal protein bL35 family.</text>
</comment>
<organism>
    <name type="scientific">Staphylococcus aureus (strain N315)</name>
    <dbReference type="NCBI Taxonomy" id="158879"/>
    <lineage>
        <taxon>Bacteria</taxon>
        <taxon>Bacillati</taxon>
        <taxon>Bacillota</taxon>
        <taxon>Bacilli</taxon>
        <taxon>Bacillales</taxon>
        <taxon>Staphylococcaceae</taxon>
        <taxon>Staphylococcus</taxon>
    </lineage>
</organism>
<evidence type="ECO:0000255" key="1">
    <source>
        <dbReference type="HAMAP-Rule" id="MF_00514"/>
    </source>
</evidence>
<evidence type="ECO:0000256" key="2">
    <source>
        <dbReference type="SAM" id="MobiDB-lite"/>
    </source>
</evidence>
<evidence type="ECO:0000305" key="3"/>
<dbReference type="EMBL" id="BA000018">
    <property type="protein sequence ID" value="BAB42770.1"/>
    <property type="molecule type" value="Genomic_DNA"/>
</dbReference>
<dbReference type="PIR" id="E89951">
    <property type="entry name" value="E89951"/>
</dbReference>
<dbReference type="RefSeq" id="WP_001125540.1">
    <property type="nucleotide sequence ID" value="NC_002745.2"/>
</dbReference>
<dbReference type="SMR" id="P66276"/>
<dbReference type="EnsemblBacteria" id="BAB42770">
    <property type="protein sequence ID" value="BAB42770"/>
    <property type="gene ID" value="BAB42770"/>
</dbReference>
<dbReference type="GeneID" id="98346041"/>
<dbReference type="KEGG" id="sau:SA1503"/>
<dbReference type="HOGENOM" id="CLU_169643_3_0_9"/>
<dbReference type="GO" id="GO:0022625">
    <property type="term" value="C:cytosolic large ribosomal subunit"/>
    <property type="evidence" value="ECO:0007669"/>
    <property type="project" value="TreeGrafter"/>
</dbReference>
<dbReference type="GO" id="GO:0003735">
    <property type="term" value="F:structural constituent of ribosome"/>
    <property type="evidence" value="ECO:0007669"/>
    <property type="project" value="InterPro"/>
</dbReference>
<dbReference type="GO" id="GO:0006412">
    <property type="term" value="P:translation"/>
    <property type="evidence" value="ECO:0007669"/>
    <property type="project" value="UniProtKB-UniRule"/>
</dbReference>
<dbReference type="FunFam" id="4.10.410.60:FF:000001">
    <property type="entry name" value="50S ribosomal protein L35"/>
    <property type="match status" value="1"/>
</dbReference>
<dbReference type="Gene3D" id="4.10.410.60">
    <property type="match status" value="1"/>
</dbReference>
<dbReference type="HAMAP" id="MF_00514">
    <property type="entry name" value="Ribosomal_bL35"/>
    <property type="match status" value="1"/>
</dbReference>
<dbReference type="InterPro" id="IPR001706">
    <property type="entry name" value="Ribosomal_bL35"/>
</dbReference>
<dbReference type="InterPro" id="IPR021137">
    <property type="entry name" value="Ribosomal_bL35-like"/>
</dbReference>
<dbReference type="InterPro" id="IPR018265">
    <property type="entry name" value="Ribosomal_bL35_CS"/>
</dbReference>
<dbReference type="InterPro" id="IPR037229">
    <property type="entry name" value="Ribosomal_bL35_sf"/>
</dbReference>
<dbReference type="NCBIfam" id="TIGR00001">
    <property type="entry name" value="rpmI_bact"/>
    <property type="match status" value="1"/>
</dbReference>
<dbReference type="PANTHER" id="PTHR33343">
    <property type="entry name" value="54S RIBOSOMAL PROTEIN BL35M"/>
    <property type="match status" value="1"/>
</dbReference>
<dbReference type="PANTHER" id="PTHR33343:SF1">
    <property type="entry name" value="LARGE RIBOSOMAL SUBUNIT PROTEIN BL35M"/>
    <property type="match status" value="1"/>
</dbReference>
<dbReference type="Pfam" id="PF01632">
    <property type="entry name" value="Ribosomal_L35p"/>
    <property type="match status" value="1"/>
</dbReference>
<dbReference type="PRINTS" id="PR00064">
    <property type="entry name" value="RIBOSOMALL35"/>
</dbReference>
<dbReference type="SUPFAM" id="SSF143034">
    <property type="entry name" value="L35p-like"/>
    <property type="match status" value="1"/>
</dbReference>
<dbReference type="PROSITE" id="PS00936">
    <property type="entry name" value="RIBOSOMAL_L35"/>
    <property type="match status" value="1"/>
</dbReference>
<accession>P66276</accession>
<accession>Q99TI2</accession>
<proteinExistence type="inferred from homology"/>
<name>RL35_STAAN</name>
<reference key="1">
    <citation type="journal article" date="2001" name="Lancet">
        <title>Whole genome sequencing of meticillin-resistant Staphylococcus aureus.</title>
        <authorList>
            <person name="Kuroda M."/>
            <person name="Ohta T."/>
            <person name="Uchiyama I."/>
            <person name="Baba T."/>
            <person name="Yuzawa H."/>
            <person name="Kobayashi I."/>
            <person name="Cui L."/>
            <person name="Oguchi A."/>
            <person name="Aoki K."/>
            <person name="Nagai Y."/>
            <person name="Lian J.-Q."/>
            <person name="Ito T."/>
            <person name="Kanamori M."/>
            <person name="Matsumaru H."/>
            <person name="Maruyama A."/>
            <person name="Murakami H."/>
            <person name="Hosoyama A."/>
            <person name="Mizutani-Ui Y."/>
            <person name="Takahashi N.K."/>
            <person name="Sawano T."/>
            <person name="Inoue R."/>
            <person name="Kaito C."/>
            <person name="Sekimizu K."/>
            <person name="Hirakawa H."/>
            <person name="Kuhara S."/>
            <person name="Goto S."/>
            <person name="Yabuzaki J."/>
            <person name="Kanehisa M."/>
            <person name="Yamashita A."/>
            <person name="Oshima K."/>
            <person name="Furuya K."/>
            <person name="Yoshino C."/>
            <person name="Shiba T."/>
            <person name="Hattori M."/>
            <person name="Ogasawara N."/>
            <person name="Hayashi H."/>
            <person name="Hiramatsu K."/>
        </authorList>
    </citation>
    <scope>NUCLEOTIDE SEQUENCE [LARGE SCALE GENOMIC DNA]</scope>
    <source>
        <strain>N315</strain>
    </source>
</reference>
<keyword id="KW-0687">Ribonucleoprotein</keyword>
<keyword id="KW-0689">Ribosomal protein</keyword>
<feature type="chain" id="PRO_0000177419" description="Large ribosomal subunit protein bL35">
    <location>
        <begin position="1"/>
        <end position="66"/>
    </location>
</feature>
<feature type="region of interest" description="Disordered" evidence="2">
    <location>
        <begin position="1"/>
        <end position="49"/>
    </location>
</feature>
<feature type="compositionally biased region" description="Basic residues" evidence="2">
    <location>
        <begin position="1"/>
        <end position="16"/>
    </location>
</feature>
<feature type="compositionally biased region" description="Basic residues" evidence="2">
    <location>
        <begin position="38"/>
        <end position="49"/>
    </location>
</feature>